<dbReference type="EC" id="3.6.5.n1" evidence="1"/>
<dbReference type="EMBL" id="CP000851">
    <property type="protein sequence ID" value="ABV86362.1"/>
    <property type="molecule type" value="Genomic_DNA"/>
</dbReference>
<dbReference type="RefSeq" id="WP_012154293.1">
    <property type="nucleotide sequence ID" value="NC_009901.1"/>
</dbReference>
<dbReference type="SMR" id="A8H1C5"/>
<dbReference type="STRING" id="398579.Spea_1035"/>
<dbReference type="KEGG" id="spl:Spea_1035"/>
<dbReference type="eggNOG" id="COG0481">
    <property type="taxonomic scope" value="Bacteria"/>
</dbReference>
<dbReference type="HOGENOM" id="CLU_009995_3_3_6"/>
<dbReference type="OrthoDB" id="9804431at2"/>
<dbReference type="Proteomes" id="UP000002608">
    <property type="component" value="Chromosome"/>
</dbReference>
<dbReference type="GO" id="GO:0005886">
    <property type="term" value="C:plasma membrane"/>
    <property type="evidence" value="ECO:0007669"/>
    <property type="project" value="UniProtKB-SubCell"/>
</dbReference>
<dbReference type="GO" id="GO:0005525">
    <property type="term" value="F:GTP binding"/>
    <property type="evidence" value="ECO:0007669"/>
    <property type="project" value="UniProtKB-UniRule"/>
</dbReference>
<dbReference type="GO" id="GO:0003924">
    <property type="term" value="F:GTPase activity"/>
    <property type="evidence" value="ECO:0007669"/>
    <property type="project" value="UniProtKB-UniRule"/>
</dbReference>
<dbReference type="GO" id="GO:0097216">
    <property type="term" value="F:guanosine tetraphosphate binding"/>
    <property type="evidence" value="ECO:0007669"/>
    <property type="project" value="UniProtKB-ARBA"/>
</dbReference>
<dbReference type="GO" id="GO:0043022">
    <property type="term" value="F:ribosome binding"/>
    <property type="evidence" value="ECO:0007669"/>
    <property type="project" value="UniProtKB-UniRule"/>
</dbReference>
<dbReference type="GO" id="GO:0003746">
    <property type="term" value="F:translation elongation factor activity"/>
    <property type="evidence" value="ECO:0007669"/>
    <property type="project" value="UniProtKB-UniRule"/>
</dbReference>
<dbReference type="GO" id="GO:0045727">
    <property type="term" value="P:positive regulation of translation"/>
    <property type="evidence" value="ECO:0007669"/>
    <property type="project" value="UniProtKB-UniRule"/>
</dbReference>
<dbReference type="CDD" id="cd03699">
    <property type="entry name" value="EF4_II"/>
    <property type="match status" value="1"/>
</dbReference>
<dbReference type="CDD" id="cd16260">
    <property type="entry name" value="EF4_III"/>
    <property type="match status" value="1"/>
</dbReference>
<dbReference type="CDD" id="cd01890">
    <property type="entry name" value="LepA"/>
    <property type="match status" value="1"/>
</dbReference>
<dbReference type="CDD" id="cd03709">
    <property type="entry name" value="lepA_C"/>
    <property type="match status" value="1"/>
</dbReference>
<dbReference type="FunFam" id="3.40.50.300:FF:000078">
    <property type="entry name" value="Elongation factor 4"/>
    <property type="match status" value="1"/>
</dbReference>
<dbReference type="FunFam" id="2.40.30.10:FF:000015">
    <property type="entry name" value="Translation factor GUF1, mitochondrial"/>
    <property type="match status" value="1"/>
</dbReference>
<dbReference type="FunFam" id="3.30.70.240:FF:000007">
    <property type="entry name" value="Translation factor GUF1, mitochondrial"/>
    <property type="match status" value="1"/>
</dbReference>
<dbReference type="FunFam" id="3.30.70.2570:FF:000001">
    <property type="entry name" value="Translation factor GUF1, mitochondrial"/>
    <property type="match status" value="1"/>
</dbReference>
<dbReference type="FunFam" id="3.30.70.870:FF:000004">
    <property type="entry name" value="Translation factor GUF1, mitochondrial"/>
    <property type="match status" value="1"/>
</dbReference>
<dbReference type="Gene3D" id="3.30.70.240">
    <property type="match status" value="1"/>
</dbReference>
<dbReference type="Gene3D" id="3.30.70.2570">
    <property type="entry name" value="Elongation factor 4, C-terminal domain"/>
    <property type="match status" value="1"/>
</dbReference>
<dbReference type="Gene3D" id="3.30.70.870">
    <property type="entry name" value="Elongation Factor G (Translational Gtpase), domain 3"/>
    <property type="match status" value="1"/>
</dbReference>
<dbReference type="Gene3D" id="3.40.50.300">
    <property type="entry name" value="P-loop containing nucleotide triphosphate hydrolases"/>
    <property type="match status" value="1"/>
</dbReference>
<dbReference type="Gene3D" id="2.40.30.10">
    <property type="entry name" value="Translation factors"/>
    <property type="match status" value="1"/>
</dbReference>
<dbReference type="HAMAP" id="MF_00071">
    <property type="entry name" value="LepA"/>
    <property type="match status" value="1"/>
</dbReference>
<dbReference type="InterPro" id="IPR006297">
    <property type="entry name" value="EF-4"/>
</dbReference>
<dbReference type="InterPro" id="IPR035647">
    <property type="entry name" value="EFG_III/V"/>
</dbReference>
<dbReference type="InterPro" id="IPR000640">
    <property type="entry name" value="EFG_V-like"/>
</dbReference>
<dbReference type="InterPro" id="IPR004161">
    <property type="entry name" value="EFTu-like_2"/>
</dbReference>
<dbReference type="InterPro" id="IPR031157">
    <property type="entry name" value="G_TR_CS"/>
</dbReference>
<dbReference type="InterPro" id="IPR038363">
    <property type="entry name" value="LepA_C_sf"/>
</dbReference>
<dbReference type="InterPro" id="IPR013842">
    <property type="entry name" value="LepA_CTD"/>
</dbReference>
<dbReference type="InterPro" id="IPR035654">
    <property type="entry name" value="LepA_IV"/>
</dbReference>
<dbReference type="InterPro" id="IPR027417">
    <property type="entry name" value="P-loop_NTPase"/>
</dbReference>
<dbReference type="InterPro" id="IPR005225">
    <property type="entry name" value="Small_GTP-bd"/>
</dbReference>
<dbReference type="InterPro" id="IPR000795">
    <property type="entry name" value="T_Tr_GTP-bd_dom"/>
</dbReference>
<dbReference type="InterPro" id="IPR009000">
    <property type="entry name" value="Transl_B-barrel_sf"/>
</dbReference>
<dbReference type="NCBIfam" id="TIGR01393">
    <property type="entry name" value="lepA"/>
    <property type="match status" value="1"/>
</dbReference>
<dbReference type="NCBIfam" id="TIGR00231">
    <property type="entry name" value="small_GTP"/>
    <property type="match status" value="1"/>
</dbReference>
<dbReference type="PANTHER" id="PTHR43512:SF4">
    <property type="entry name" value="TRANSLATION FACTOR GUF1 HOMOLOG, CHLOROPLASTIC"/>
    <property type="match status" value="1"/>
</dbReference>
<dbReference type="PANTHER" id="PTHR43512">
    <property type="entry name" value="TRANSLATION FACTOR GUF1-RELATED"/>
    <property type="match status" value="1"/>
</dbReference>
<dbReference type="Pfam" id="PF00679">
    <property type="entry name" value="EFG_C"/>
    <property type="match status" value="1"/>
</dbReference>
<dbReference type="Pfam" id="PF00009">
    <property type="entry name" value="GTP_EFTU"/>
    <property type="match status" value="1"/>
</dbReference>
<dbReference type="Pfam" id="PF03144">
    <property type="entry name" value="GTP_EFTU_D2"/>
    <property type="match status" value="1"/>
</dbReference>
<dbReference type="Pfam" id="PF06421">
    <property type="entry name" value="LepA_C"/>
    <property type="match status" value="1"/>
</dbReference>
<dbReference type="PRINTS" id="PR00315">
    <property type="entry name" value="ELONGATNFCT"/>
</dbReference>
<dbReference type="SUPFAM" id="SSF54980">
    <property type="entry name" value="EF-G C-terminal domain-like"/>
    <property type="match status" value="2"/>
</dbReference>
<dbReference type="SUPFAM" id="SSF52540">
    <property type="entry name" value="P-loop containing nucleoside triphosphate hydrolases"/>
    <property type="match status" value="1"/>
</dbReference>
<dbReference type="SUPFAM" id="SSF50447">
    <property type="entry name" value="Translation proteins"/>
    <property type="match status" value="1"/>
</dbReference>
<dbReference type="PROSITE" id="PS00301">
    <property type="entry name" value="G_TR_1"/>
    <property type="match status" value="1"/>
</dbReference>
<dbReference type="PROSITE" id="PS51722">
    <property type="entry name" value="G_TR_2"/>
    <property type="match status" value="1"/>
</dbReference>
<comment type="function">
    <text evidence="1">Required for accurate and efficient protein synthesis under certain stress conditions. May act as a fidelity factor of the translation reaction, by catalyzing a one-codon backward translocation of tRNAs on improperly translocated ribosomes. Back-translocation proceeds from a post-translocation (POST) complex to a pre-translocation (PRE) complex, thus giving elongation factor G a second chance to translocate the tRNAs correctly. Binds to ribosomes in a GTP-dependent manner.</text>
</comment>
<comment type="catalytic activity">
    <reaction evidence="1">
        <text>GTP + H2O = GDP + phosphate + H(+)</text>
        <dbReference type="Rhea" id="RHEA:19669"/>
        <dbReference type="ChEBI" id="CHEBI:15377"/>
        <dbReference type="ChEBI" id="CHEBI:15378"/>
        <dbReference type="ChEBI" id="CHEBI:37565"/>
        <dbReference type="ChEBI" id="CHEBI:43474"/>
        <dbReference type="ChEBI" id="CHEBI:58189"/>
        <dbReference type="EC" id="3.6.5.n1"/>
    </reaction>
</comment>
<comment type="subcellular location">
    <subcellularLocation>
        <location evidence="1">Cell inner membrane</location>
        <topology evidence="1">Peripheral membrane protein</topology>
        <orientation evidence="1">Cytoplasmic side</orientation>
    </subcellularLocation>
</comment>
<comment type="similarity">
    <text evidence="1">Belongs to the TRAFAC class translation factor GTPase superfamily. Classic translation factor GTPase family. LepA subfamily.</text>
</comment>
<gene>
    <name evidence="1" type="primary">lepA</name>
    <name type="ordered locus">Spea_1035</name>
</gene>
<sequence>MKHIRNFSIIAHIDHGKSTLSDRLIQECGGLTDREMAAQVLDSMDIERERGITIKAQSVTLDYLANDGETYQLNFIDTPGHVDFSYEVSRSLAACEGALLVVDAGQGVEAQTLANCYTALEMDMDVVPVLNKIDLPQADPDRVAEEIEDIVGIEATDAVRCSAKTGIGIKDVLEVIVEQIPPPEGDPEGPLQALIIDSWFDSYLGVVSLVRIKNGILKKGDKFKVMSTGQNYNADRVGIFTPKQTDTTELKTGEVGFVIAGIKEIHGAPVGDTLTHSKHGAETPLAGFKKVKPQVYAGLFPISTDDYENFRDALNKLSLNDASLFFEPETSSALGFGFRIGFLGLLHMEIIQERLEREYNLELITTAPTVVYEIVQTNGETIYVDNPSDLPAVNNIAEMREPIVETNILVPKEYLGNVITLCIEKRGVQTNLVYHGNQVALTYELPMAEVVMDFFDRLKSTSRGYASLEYNFIRFEPADMVRLDILINGDRVDALAMIIHKGLIRSKGLALVNKMKELIPRQMFDIAVQAAVGSQIIARSSIKAMRKDVTAKCYGGDVSRKKKLLNKQKEGKKRMKQVGNVEVPQEAFLAVLKLND</sequence>
<reference key="1">
    <citation type="submission" date="2007-10" db="EMBL/GenBank/DDBJ databases">
        <title>Complete sequence of Shewanella pealeana ATCC 700345.</title>
        <authorList>
            <consortium name="US DOE Joint Genome Institute"/>
            <person name="Copeland A."/>
            <person name="Lucas S."/>
            <person name="Lapidus A."/>
            <person name="Barry K."/>
            <person name="Glavina del Rio T."/>
            <person name="Dalin E."/>
            <person name="Tice H."/>
            <person name="Pitluck S."/>
            <person name="Chertkov O."/>
            <person name="Brettin T."/>
            <person name="Bruce D."/>
            <person name="Detter J.C."/>
            <person name="Han C."/>
            <person name="Schmutz J."/>
            <person name="Larimer F."/>
            <person name="Land M."/>
            <person name="Hauser L."/>
            <person name="Kyrpides N."/>
            <person name="Kim E."/>
            <person name="Zhao J.-S.Z."/>
            <person name="Manno D."/>
            <person name="Hawari J."/>
            <person name="Richardson P."/>
        </authorList>
    </citation>
    <scope>NUCLEOTIDE SEQUENCE [LARGE SCALE GENOMIC DNA]</scope>
    <source>
        <strain>ATCC 700345 / ANG-SQ1</strain>
    </source>
</reference>
<name>LEPA_SHEPA</name>
<protein>
    <recommendedName>
        <fullName evidence="1">Elongation factor 4</fullName>
        <shortName evidence="1">EF-4</shortName>
        <ecNumber evidence="1">3.6.5.n1</ecNumber>
    </recommendedName>
    <alternativeName>
        <fullName evidence="1">Ribosomal back-translocase LepA</fullName>
    </alternativeName>
</protein>
<proteinExistence type="inferred from homology"/>
<keyword id="KW-0997">Cell inner membrane</keyword>
<keyword id="KW-1003">Cell membrane</keyword>
<keyword id="KW-0342">GTP-binding</keyword>
<keyword id="KW-0378">Hydrolase</keyword>
<keyword id="KW-0472">Membrane</keyword>
<keyword id="KW-0547">Nucleotide-binding</keyword>
<keyword id="KW-0648">Protein biosynthesis</keyword>
<keyword id="KW-1185">Reference proteome</keyword>
<accession>A8H1C5</accession>
<organism>
    <name type="scientific">Shewanella pealeana (strain ATCC 700345 / ANG-SQ1)</name>
    <dbReference type="NCBI Taxonomy" id="398579"/>
    <lineage>
        <taxon>Bacteria</taxon>
        <taxon>Pseudomonadati</taxon>
        <taxon>Pseudomonadota</taxon>
        <taxon>Gammaproteobacteria</taxon>
        <taxon>Alteromonadales</taxon>
        <taxon>Shewanellaceae</taxon>
        <taxon>Shewanella</taxon>
    </lineage>
</organism>
<feature type="chain" id="PRO_1000075148" description="Elongation factor 4">
    <location>
        <begin position="1"/>
        <end position="596"/>
    </location>
</feature>
<feature type="domain" description="tr-type G">
    <location>
        <begin position="2"/>
        <end position="184"/>
    </location>
</feature>
<feature type="binding site" evidence="1">
    <location>
        <begin position="14"/>
        <end position="19"/>
    </location>
    <ligand>
        <name>GTP</name>
        <dbReference type="ChEBI" id="CHEBI:37565"/>
    </ligand>
</feature>
<feature type="binding site" evidence="1">
    <location>
        <begin position="131"/>
        <end position="134"/>
    </location>
    <ligand>
        <name>GTP</name>
        <dbReference type="ChEBI" id="CHEBI:37565"/>
    </ligand>
</feature>
<evidence type="ECO:0000255" key="1">
    <source>
        <dbReference type="HAMAP-Rule" id="MF_00071"/>
    </source>
</evidence>